<evidence type="ECO:0000255" key="1">
    <source>
        <dbReference type="HAMAP-Rule" id="MF_00005"/>
    </source>
</evidence>
<name>ASSY_PROM9</name>
<accession>Q317T4</accession>
<organism>
    <name type="scientific">Prochlorococcus marinus (strain MIT 9312)</name>
    <dbReference type="NCBI Taxonomy" id="74546"/>
    <lineage>
        <taxon>Bacteria</taxon>
        <taxon>Bacillati</taxon>
        <taxon>Cyanobacteriota</taxon>
        <taxon>Cyanophyceae</taxon>
        <taxon>Synechococcales</taxon>
        <taxon>Prochlorococcaceae</taxon>
        <taxon>Prochlorococcus</taxon>
    </lineage>
</organism>
<sequence length="404" mass="44696">MQQVNKVVLAYSGGVDTSVCIPYLKNEYGISEVVTFVADLGQGEDLELIRKKALNSGASKSIIGNLVSSFVERYAFPAIRANALYLDKYPLSTALARPLIAENLVNIAREINADAVAHGCTGKGNDQVRFDLAINALGPDLKIITPAREWNMSREEAILYGEKFGIPAPVSKKSPYSIDVNLLGRSIEAGILEDPMQEAPEDIFAMTSSINNSPESPLDIEIIFKNGFPVGINNEFLNPVEIIQKANVLAGEYGFGRIDMMEDRVVGIKSREIYETPGLLLLIKAHKELESITLNPDVIDFKGVVEKKWGQLVYQGFWFGPLKESLDAFIASTQTSVNGRVKIRLHKGNAIVIGRISENNSLYREDLATYSQDDVFKHSLAEGFIYMWGMSNKIWAELNSKKID</sequence>
<gene>
    <name evidence="1" type="primary">argG</name>
    <name type="ordered locus">PMT9312_1800</name>
</gene>
<comment type="catalytic activity">
    <reaction evidence="1">
        <text>L-citrulline + L-aspartate + ATP = 2-(N(omega)-L-arginino)succinate + AMP + diphosphate + H(+)</text>
        <dbReference type="Rhea" id="RHEA:10932"/>
        <dbReference type="ChEBI" id="CHEBI:15378"/>
        <dbReference type="ChEBI" id="CHEBI:29991"/>
        <dbReference type="ChEBI" id="CHEBI:30616"/>
        <dbReference type="ChEBI" id="CHEBI:33019"/>
        <dbReference type="ChEBI" id="CHEBI:57472"/>
        <dbReference type="ChEBI" id="CHEBI:57743"/>
        <dbReference type="ChEBI" id="CHEBI:456215"/>
        <dbReference type="EC" id="6.3.4.5"/>
    </reaction>
</comment>
<comment type="pathway">
    <text evidence="1">Amino-acid biosynthesis; L-arginine biosynthesis; L-arginine from L-ornithine and carbamoyl phosphate: step 2/3.</text>
</comment>
<comment type="subunit">
    <text evidence="1">Homotetramer.</text>
</comment>
<comment type="subcellular location">
    <subcellularLocation>
        <location evidence="1">Cytoplasm</location>
    </subcellularLocation>
</comment>
<comment type="similarity">
    <text evidence="1">Belongs to the argininosuccinate synthase family. Type 1 subfamily.</text>
</comment>
<reference key="1">
    <citation type="journal article" date="2006" name="Science">
        <title>Genomic islands and the ecology and evolution of Prochlorococcus.</title>
        <authorList>
            <person name="Coleman M.L."/>
            <person name="Sullivan M.B."/>
            <person name="Martiny A.C."/>
            <person name="Steglich C."/>
            <person name="Barry K."/>
            <person name="Delong E.F."/>
            <person name="Chisholm S.W."/>
        </authorList>
    </citation>
    <scope>NUCLEOTIDE SEQUENCE [LARGE SCALE GENOMIC DNA]</scope>
    <source>
        <strain>MIT 9312</strain>
    </source>
</reference>
<feature type="chain" id="PRO_0000263950" description="Argininosuccinate synthase">
    <location>
        <begin position="1"/>
        <end position="404"/>
    </location>
</feature>
<feature type="binding site" evidence="1">
    <location>
        <begin position="10"/>
        <end position="18"/>
    </location>
    <ligand>
        <name>ATP</name>
        <dbReference type="ChEBI" id="CHEBI:30616"/>
    </ligand>
</feature>
<feature type="binding site" evidence="1">
    <location>
        <position position="38"/>
    </location>
    <ligand>
        <name>ATP</name>
        <dbReference type="ChEBI" id="CHEBI:30616"/>
    </ligand>
</feature>
<feature type="binding site" evidence="1">
    <location>
        <position position="89"/>
    </location>
    <ligand>
        <name>L-citrulline</name>
        <dbReference type="ChEBI" id="CHEBI:57743"/>
    </ligand>
</feature>
<feature type="binding site" evidence="1">
    <location>
        <position position="119"/>
    </location>
    <ligand>
        <name>ATP</name>
        <dbReference type="ChEBI" id="CHEBI:30616"/>
    </ligand>
</feature>
<feature type="binding site" evidence="1">
    <location>
        <position position="121"/>
    </location>
    <ligand>
        <name>L-aspartate</name>
        <dbReference type="ChEBI" id="CHEBI:29991"/>
    </ligand>
</feature>
<feature type="binding site" evidence="1">
    <location>
        <position position="125"/>
    </location>
    <ligand>
        <name>L-aspartate</name>
        <dbReference type="ChEBI" id="CHEBI:29991"/>
    </ligand>
</feature>
<feature type="binding site" evidence="1">
    <location>
        <position position="125"/>
    </location>
    <ligand>
        <name>L-citrulline</name>
        <dbReference type="ChEBI" id="CHEBI:57743"/>
    </ligand>
</feature>
<feature type="binding site" evidence="1">
    <location>
        <position position="126"/>
    </location>
    <ligand>
        <name>L-aspartate</name>
        <dbReference type="ChEBI" id="CHEBI:29991"/>
    </ligand>
</feature>
<feature type="binding site" evidence="1">
    <location>
        <position position="129"/>
    </location>
    <ligand>
        <name>L-citrulline</name>
        <dbReference type="ChEBI" id="CHEBI:57743"/>
    </ligand>
</feature>
<feature type="binding site" evidence="1">
    <location>
        <position position="177"/>
    </location>
    <ligand>
        <name>L-citrulline</name>
        <dbReference type="ChEBI" id="CHEBI:57743"/>
    </ligand>
</feature>
<feature type="binding site" evidence="1">
    <location>
        <position position="186"/>
    </location>
    <ligand>
        <name>L-citrulline</name>
        <dbReference type="ChEBI" id="CHEBI:57743"/>
    </ligand>
</feature>
<feature type="binding site" evidence="1">
    <location>
        <position position="262"/>
    </location>
    <ligand>
        <name>L-citrulline</name>
        <dbReference type="ChEBI" id="CHEBI:57743"/>
    </ligand>
</feature>
<feature type="binding site" evidence="1">
    <location>
        <position position="274"/>
    </location>
    <ligand>
        <name>L-citrulline</name>
        <dbReference type="ChEBI" id="CHEBI:57743"/>
    </ligand>
</feature>
<keyword id="KW-0028">Amino-acid biosynthesis</keyword>
<keyword id="KW-0055">Arginine biosynthesis</keyword>
<keyword id="KW-0067">ATP-binding</keyword>
<keyword id="KW-0963">Cytoplasm</keyword>
<keyword id="KW-0436">Ligase</keyword>
<keyword id="KW-0547">Nucleotide-binding</keyword>
<proteinExistence type="inferred from homology"/>
<protein>
    <recommendedName>
        <fullName evidence="1">Argininosuccinate synthase</fullName>
        <ecNumber evidence="1">6.3.4.5</ecNumber>
    </recommendedName>
    <alternativeName>
        <fullName evidence="1">Citrulline--aspartate ligase</fullName>
    </alternativeName>
</protein>
<dbReference type="EC" id="6.3.4.5" evidence="1"/>
<dbReference type="EMBL" id="CP000111">
    <property type="protein sequence ID" value="ABB50861.1"/>
    <property type="molecule type" value="Genomic_DNA"/>
</dbReference>
<dbReference type="RefSeq" id="WP_011377342.1">
    <property type="nucleotide sequence ID" value="NC_007577.1"/>
</dbReference>
<dbReference type="SMR" id="Q317T4"/>
<dbReference type="STRING" id="74546.PMT9312_1800"/>
<dbReference type="KEGG" id="pmi:PMT9312_1800"/>
<dbReference type="eggNOG" id="COG0137">
    <property type="taxonomic scope" value="Bacteria"/>
</dbReference>
<dbReference type="HOGENOM" id="CLU_032784_4_2_3"/>
<dbReference type="OrthoDB" id="9801641at2"/>
<dbReference type="UniPathway" id="UPA00068">
    <property type="reaction ID" value="UER00113"/>
</dbReference>
<dbReference type="Proteomes" id="UP000002715">
    <property type="component" value="Chromosome"/>
</dbReference>
<dbReference type="GO" id="GO:0005737">
    <property type="term" value="C:cytoplasm"/>
    <property type="evidence" value="ECO:0007669"/>
    <property type="project" value="UniProtKB-SubCell"/>
</dbReference>
<dbReference type="GO" id="GO:0004055">
    <property type="term" value="F:argininosuccinate synthase activity"/>
    <property type="evidence" value="ECO:0007669"/>
    <property type="project" value="UniProtKB-UniRule"/>
</dbReference>
<dbReference type="GO" id="GO:0005524">
    <property type="term" value="F:ATP binding"/>
    <property type="evidence" value="ECO:0007669"/>
    <property type="project" value="UniProtKB-UniRule"/>
</dbReference>
<dbReference type="GO" id="GO:0000053">
    <property type="term" value="P:argininosuccinate metabolic process"/>
    <property type="evidence" value="ECO:0007669"/>
    <property type="project" value="TreeGrafter"/>
</dbReference>
<dbReference type="GO" id="GO:0006526">
    <property type="term" value="P:L-arginine biosynthetic process"/>
    <property type="evidence" value="ECO:0007669"/>
    <property type="project" value="UniProtKB-UniRule"/>
</dbReference>
<dbReference type="GO" id="GO:0000050">
    <property type="term" value="P:urea cycle"/>
    <property type="evidence" value="ECO:0007669"/>
    <property type="project" value="TreeGrafter"/>
</dbReference>
<dbReference type="CDD" id="cd01999">
    <property type="entry name" value="ASS"/>
    <property type="match status" value="1"/>
</dbReference>
<dbReference type="FunFam" id="3.40.50.620:FF:000019">
    <property type="entry name" value="Argininosuccinate synthase"/>
    <property type="match status" value="1"/>
</dbReference>
<dbReference type="FunFam" id="3.90.1260.10:FF:000007">
    <property type="entry name" value="Argininosuccinate synthase"/>
    <property type="match status" value="1"/>
</dbReference>
<dbReference type="Gene3D" id="3.90.1260.10">
    <property type="entry name" value="Argininosuccinate synthetase, chain A, domain 2"/>
    <property type="match status" value="1"/>
</dbReference>
<dbReference type="Gene3D" id="3.40.50.620">
    <property type="entry name" value="HUPs"/>
    <property type="match status" value="1"/>
</dbReference>
<dbReference type="Gene3D" id="1.20.5.470">
    <property type="entry name" value="Single helix bin"/>
    <property type="match status" value="1"/>
</dbReference>
<dbReference type="HAMAP" id="MF_00005">
    <property type="entry name" value="Arg_succ_synth_type1"/>
    <property type="match status" value="1"/>
</dbReference>
<dbReference type="InterPro" id="IPR048268">
    <property type="entry name" value="Arginosuc_syn_C"/>
</dbReference>
<dbReference type="InterPro" id="IPR048267">
    <property type="entry name" value="Arginosuc_syn_N"/>
</dbReference>
<dbReference type="InterPro" id="IPR001518">
    <property type="entry name" value="Arginosuc_synth"/>
</dbReference>
<dbReference type="InterPro" id="IPR018223">
    <property type="entry name" value="Arginosuc_synth_CS"/>
</dbReference>
<dbReference type="InterPro" id="IPR023434">
    <property type="entry name" value="Arginosuc_synth_type_1_subfam"/>
</dbReference>
<dbReference type="InterPro" id="IPR024074">
    <property type="entry name" value="AS_cat/multimer_dom_body"/>
</dbReference>
<dbReference type="InterPro" id="IPR014729">
    <property type="entry name" value="Rossmann-like_a/b/a_fold"/>
</dbReference>
<dbReference type="NCBIfam" id="TIGR00032">
    <property type="entry name" value="argG"/>
    <property type="match status" value="1"/>
</dbReference>
<dbReference type="NCBIfam" id="NF001770">
    <property type="entry name" value="PRK00509.1"/>
    <property type="match status" value="1"/>
</dbReference>
<dbReference type="PANTHER" id="PTHR11587">
    <property type="entry name" value="ARGININOSUCCINATE SYNTHASE"/>
    <property type="match status" value="1"/>
</dbReference>
<dbReference type="PANTHER" id="PTHR11587:SF2">
    <property type="entry name" value="ARGININOSUCCINATE SYNTHASE"/>
    <property type="match status" value="1"/>
</dbReference>
<dbReference type="Pfam" id="PF20979">
    <property type="entry name" value="Arginosuc_syn_C"/>
    <property type="match status" value="1"/>
</dbReference>
<dbReference type="Pfam" id="PF00764">
    <property type="entry name" value="Arginosuc_synth"/>
    <property type="match status" value="1"/>
</dbReference>
<dbReference type="SUPFAM" id="SSF52402">
    <property type="entry name" value="Adenine nucleotide alpha hydrolases-like"/>
    <property type="match status" value="1"/>
</dbReference>
<dbReference type="SUPFAM" id="SSF69864">
    <property type="entry name" value="Argininosuccinate synthetase, C-terminal domain"/>
    <property type="match status" value="1"/>
</dbReference>
<dbReference type="PROSITE" id="PS00564">
    <property type="entry name" value="ARGININOSUCCIN_SYN_1"/>
    <property type="match status" value="1"/>
</dbReference>
<dbReference type="PROSITE" id="PS00565">
    <property type="entry name" value="ARGININOSUCCIN_SYN_2"/>
    <property type="match status" value="1"/>
</dbReference>